<gene>
    <name type="primary">ple2</name>
</gene>
<dbReference type="EMBL" id="AF301507">
    <property type="protein sequence ID" value="AAK52842.1"/>
    <property type="molecule type" value="mRNA"/>
</dbReference>
<dbReference type="EMBL" id="AF301511">
    <property type="protein sequence ID" value="AAK52846.1"/>
    <property type="molecule type" value="Genomic_DNA"/>
</dbReference>
<dbReference type="EMBL" id="AF301512">
    <property type="protein sequence ID" value="AAK52847.1"/>
    <property type="molecule type" value="Genomic_DNA"/>
</dbReference>
<dbReference type="EMBL" id="AY282499">
    <property type="protein sequence ID" value="AAQ16625.1"/>
    <property type="molecule type" value="Genomic_DNA"/>
</dbReference>
<dbReference type="PDB" id="6RSF">
    <property type="method" value="NMR"/>
    <property type="chains" value="A=23-47"/>
</dbReference>
<dbReference type="PDBsum" id="6RSF"/>
<dbReference type="BMRB" id="Q90ZY0"/>
<dbReference type="SMR" id="Q90ZY0"/>
<dbReference type="TCDB" id="1.C.62.1.1">
    <property type="family name" value="the pseudopleuronectes americanus (flounder) pleurocidin (pleurocidin) family"/>
</dbReference>
<dbReference type="GO" id="GO:0005576">
    <property type="term" value="C:extracellular region"/>
    <property type="evidence" value="ECO:0007669"/>
    <property type="project" value="UniProtKB-SubCell"/>
</dbReference>
<dbReference type="GO" id="GO:0042742">
    <property type="term" value="P:defense response to bacterium"/>
    <property type="evidence" value="ECO:0007669"/>
    <property type="project" value="UniProtKB-KW"/>
</dbReference>
<dbReference type="InterPro" id="IPR012515">
    <property type="entry name" value="Antimicrobial12"/>
</dbReference>
<dbReference type="Pfam" id="PF08107">
    <property type="entry name" value="Antimicrobial12"/>
    <property type="match status" value="1"/>
</dbReference>
<proteinExistence type="evidence at protein level"/>
<feature type="signal peptide" evidence="1">
    <location>
        <begin position="1"/>
        <end position="22"/>
    </location>
</feature>
<feature type="peptide" id="PRO_0000000275" description="Pleurocidin">
    <location>
        <begin position="23"/>
        <end position="47"/>
    </location>
</feature>
<feature type="propeptide" id="PRO_0000000276">
    <location>
        <begin position="48"/>
        <end position="68"/>
    </location>
</feature>
<feature type="sequence conflict" description="In Ref. 3; AA sequence." evidence="2" ref="3">
    <original>TH</original>
    <variation>HT</variation>
    <location>
        <begin position="44"/>
        <end position="45"/>
    </location>
</feature>
<feature type="helix" evidence="3">
    <location>
        <begin position="29"/>
        <end position="31"/>
    </location>
</feature>
<feature type="turn" evidence="3">
    <location>
        <begin position="32"/>
        <end position="35"/>
    </location>
</feature>
<feature type="turn" evidence="3">
    <location>
        <begin position="37"/>
        <end position="40"/>
    </location>
</feature>
<comment type="function">
    <text>Antimicrobial peptide with potent activity against Gram-positive and Gram-negative bacteria. Activity against E.coli and B.subtilis. Weaker activity against L.mucor, s.marcescens and P.aeruginosa. May play a role in innate host defense.</text>
</comment>
<comment type="subcellular location">
    <subcellularLocation>
        <location>Secreted</location>
    </subcellularLocation>
</comment>
<comment type="tissue specificity">
    <text>Goblet cells.</text>
</comment>
<comment type="similarity">
    <text evidence="2">Belongs to the pleurocidin family.</text>
</comment>
<accession>Q90ZY0</accession>
<accession>Q90VW6</accession>
<sequence>MKFTATFLMIAIFVLMVEPGECGWGSFFKKAAHVGKHVGKAALTHYLGDKQELNKRAVDEDPNVIVFE</sequence>
<protein>
    <recommendedName>
        <fullName>Pleurocidin</fullName>
    </recommendedName>
</protein>
<organism>
    <name type="scientific">Pseudopleuronectes americanus</name>
    <name type="common">Winter flounder</name>
    <name type="synonym">Pleuronectes americanus</name>
    <dbReference type="NCBI Taxonomy" id="8265"/>
    <lineage>
        <taxon>Eukaryota</taxon>
        <taxon>Metazoa</taxon>
        <taxon>Chordata</taxon>
        <taxon>Craniata</taxon>
        <taxon>Vertebrata</taxon>
        <taxon>Euteleostomi</taxon>
        <taxon>Actinopterygii</taxon>
        <taxon>Neopterygii</taxon>
        <taxon>Teleostei</taxon>
        <taxon>Neoteleostei</taxon>
        <taxon>Acanthomorphata</taxon>
        <taxon>Carangaria</taxon>
        <taxon>Pleuronectiformes</taxon>
        <taxon>Pleuronectoidei</taxon>
        <taxon>Pleuronectidae</taxon>
        <taxon>Pseudopleuronectes</taxon>
    </lineage>
</organism>
<reference key="1">
    <citation type="journal article" date="2001" name="Dev. Comp. Immunol.">
        <title>Cloning and developmental expression of a family of pleurocidin-like antimicrobial peptides from winter flounder, Pleuronectes americanus (Walbaum).</title>
        <authorList>
            <person name="Douglas S.E."/>
            <person name="Gallant J.W."/>
            <person name="Gong Z."/>
            <person name="Hew C.-L."/>
        </authorList>
    </citation>
    <scope>NUCLEOTIDE SEQUENCE [GENOMIC DNA / MRNA]</scope>
    <source>
        <tissue>Skin</tissue>
    </source>
</reference>
<reference key="2">
    <citation type="journal article" date="2003" name="Eur. J. Biochem.">
        <title>Identification, structure and differential expression of novel pleurocidins clustered on the genome of the winter flounder, Pseudopleuronectes americanus (Walbaum).</title>
        <authorList>
            <person name="Douglas S.E."/>
            <person name="Patrzykat A."/>
            <person name="Pytyck J."/>
            <person name="Gallant J.W."/>
        </authorList>
    </citation>
    <scope>NUCLEOTIDE SEQUENCE</scope>
</reference>
<reference key="3">
    <citation type="journal article" date="1997" name="J. Biol. Chem.">
        <title>Isolation and characterization of pleurocidin, an antimicrobial peptide in the skin secretions of winter flounder.</title>
        <authorList>
            <person name="Cole A.M."/>
            <person name="Weis P."/>
            <person name="Diamond G."/>
        </authorList>
    </citation>
    <scope>PROTEIN SEQUENCE OF 23-47</scope>
    <scope>CHARACTERIZATION</scope>
    <source>
        <tissue>Epidermis</tissue>
        <tissue>Skin mucus</tissue>
    </source>
</reference>
<keyword id="KW-0002">3D-structure</keyword>
<keyword id="KW-0044">Antibiotic</keyword>
<keyword id="KW-0929">Antimicrobial</keyword>
<keyword id="KW-0903">Direct protein sequencing</keyword>
<keyword id="KW-0964">Secreted</keyword>
<keyword id="KW-0732">Signal</keyword>
<name>PLE2_PSEAM</name>
<evidence type="ECO:0000269" key="1">
    <source>
    </source>
</evidence>
<evidence type="ECO:0000305" key="2"/>
<evidence type="ECO:0007829" key="3">
    <source>
        <dbReference type="PDB" id="6RSF"/>
    </source>
</evidence>